<evidence type="ECO:0000255" key="1">
    <source>
        <dbReference type="HAMAP-Rule" id="MF_00130"/>
    </source>
</evidence>
<evidence type="ECO:0000256" key="2">
    <source>
        <dbReference type="SAM" id="MobiDB-lite"/>
    </source>
</evidence>
<accession>C1CCD5</accession>
<sequence>MVNYPHKVSSQKRQTSLSQPKNFANRGMSFEKMINATNDYYLSQGLAVIHKKPTPIQIVQVDYPQRSRAKIVEAYFRQASTTDYSGVYNGYYIDFEVKETKQKRAIPMKNFHPHQIQHMEQVLAQQGICFVLLHFSSQQETYLLPAFDLIRFYHQDKGQKSMPLEYIREYGYEIKAGAFPQIPYLNVIKEHLLGGKTR</sequence>
<dbReference type="EC" id="3.1.21.10" evidence="1"/>
<dbReference type="EMBL" id="CP000919">
    <property type="protein sequence ID" value="ACO18283.1"/>
    <property type="molecule type" value="Genomic_DNA"/>
</dbReference>
<dbReference type="RefSeq" id="WP_000248787.1">
    <property type="nucleotide sequence ID" value="NC_012466.1"/>
</dbReference>
<dbReference type="SMR" id="C1CCD5"/>
<dbReference type="GeneID" id="45652167"/>
<dbReference type="KEGG" id="sjj:SPJ_0356"/>
<dbReference type="HOGENOM" id="CLU_096340_0_0_9"/>
<dbReference type="Proteomes" id="UP000002206">
    <property type="component" value="Chromosome"/>
</dbReference>
<dbReference type="GO" id="GO:0005737">
    <property type="term" value="C:cytoplasm"/>
    <property type="evidence" value="ECO:0007669"/>
    <property type="project" value="UniProtKB-SubCell"/>
</dbReference>
<dbReference type="GO" id="GO:0004519">
    <property type="term" value="F:endonuclease activity"/>
    <property type="evidence" value="ECO:0007669"/>
    <property type="project" value="UniProtKB-UniRule"/>
</dbReference>
<dbReference type="GO" id="GO:0000287">
    <property type="term" value="F:magnesium ion binding"/>
    <property type="evidence" value="ECO:0007669"/>
    <property type="project" value="UniProtKB-UniRule"/>
</dbReference>
<dbReference type="GO" id="GO:0003676">
    <property type="term" value="F:nucleic acid binding"/>
    <property type="evidence" value="ECO:0007669"/>
    <property type="project" value="InterPro"/>
</dbReference>
<dbReference type="GO" id="GO:0007059">
    <property type="term" value="P:chromosome segregation"/>
    <property type="evidence" value="ECO:0007669"/>
    <property type="project" value="UniProtKB-UniRule"/>
</dbReference>
<dbReference type="GO" id="GO:0006310">
    <property type="term" value="P:DNA recombination"/>
    <property type="evidence" value="ECO:0007669"/>
    <property type="project" value="UniProtKB-UniRule"/>
</dbReference>
<dbReference type="GO" id="GO:0006281">
    <property type="term" value="P:DNA repair"/>
    <property type="evidence" value="ECO:0007669"/>
    <property type="project" value="UniProtKB-UniRule"/>
</dbReference>
<dbReference type="CDD" id="cd22354">
    <property type="entry name" value="RecU-like"/>
    <property type="match status" value="1"/>
</dbReference>
<dbReference type="Gene3D" id="3.40.1350.10">
    <property type="match status" value="1"/>
</dbReference>
<dbReference type="HAMAP" id="MF_00130">
    <property type="entry name" value="RecU"/>
    <property type="match status" value="1"/>
</dbReference>
<dbReference type="InterPro" id="IPR004612">
    <property type="entry name" value="Resolv_RecU"/>
</dbReference>
<dbReference type="InterPro" id="IPR011335">
    <property type="entry name" value="Restrct_endonuc-II-like"/>
</dbReference>
<dbReference type="InterPro" id="IPR011856">
    <property type="entry name" value="tRNA_endonuc-like_dom_sf"/>
</dbReference>
<dbReference type="NCBIfam" id="NF002580">
    <property type="entry name" value="PRK02234.1-1"/>
    <property type="match status" value="1"/>
</dbReference>
<dbReference type="NCBIfam" id="NF002584">
    <property type="entry name" value="PRK02234.1-5"/>
    <property type="match status" value="1"/>
</dbReference>
<dbReference type="NCBIfam" id="TIGR00648">
    <property type="entry name" value="recU"/>
    <property type="match status" value="1"/>
</dbReference>
<dbReference type="Pfam" id="PF03838">
    <property type="entry name" value="RecU"/>
    <property type="match status" value="1"/>
</dbReference>
<dbReference type="PIRSF" id="PIRSF037785">
    <property type="entry name" value="RecU"/>
    <property type="match status" value="1"/>
</dbReference>
<dbReference type="SUPFAM" id="SSF52980">
    <property type="entry name" value="Restriction endonuclease-like"/>
    <property type="match status" value="1"/>
</dbReference>
<feature type="chain" id="PRO_1000193444" description="Holliday junction resolvase RecU">
    <location>
        <begin position="1"/>
        <end position="198"/>
    </location>
</feature>
<feature type="region of interest" description="Disordered" evidence="2">
    <location>
        <begin position="1"/>
        <end position="22"/>
    </location>
</feature>
<feature type="compositionally biased region" description="Polar residues" evidence="2">
    <location>
        <begin position="11"/>
        <end position="22"/>
    </location>
</feature>
<feature type="binding site" evidence="1">
    <location>
        <position position="81"/>
    </location>
    <ligand>
        <name>Mg(2+)</name>
        <dbReference type="ChEBI" id="CHEBI:18420"/>
    </ligand>
</feature>
<feature type="binding site" evidence="1">
    <location>
        <position position="83"/>
    </location>
    <ligand>
        <name>Mg(2+)</name>
        <dbReference type="ChEBI" id="CHEBI:18420"/>
    </ligand>
</feature>
<feature type="binding site" evidence="1">
    <location>
        <position position="96"/>
    </location>
    <ligand>
        <name>Mg(2+)</name>
        <dbReference type="ChEBI" id="CHEBI:18420"/>
    </ligand>
</feature>
<feature type="binding site" evidence="1">
    <location>
        <position position="115"/>
    </location>
    <ligand>
        <name>Mg(2+)</name>
        <dbReference type="ChEBI" id="CHEBI:18420"/>
    </ligand>
</feature>
<feature type="site" description="Transition state stabilizer" evidence="1">
    <location>
        <position position="98"/>
    </location>
</feature>
<keyword id="KW-0963">Cytoplasm</keyword>
<keyword id="KW-0227">DNA damage</keyword>
<keyword id="KW-0233">DNA recombination</keyword>
<keyword id="KW-0234">DNA repair</keyword>
<keyword id="KW-0255">Endonuclease</keyword>
<keyword id="KW-0378">Hydrolase</keyword>
<keyword id="KW-0460">Magnesium</keyword>
<keyword id="KW-0479">Metal-binding</keyword>
<keyword id="KW-0540">Nuclease</keyword>
<name>RECU_STRZJ</name>
<organism>
    <name type="scientific">Streptococcus pneumoniae (strain JJA)</name>
    <dbReference type="NCBI Taxonomy" id="488222"/>
    <lineage>
        <taxon>Bacteria</taxon>
        <taxon>Bacillati</taxon>
        <taxon>Bacillota</taxon>
        <taxon>Bacilli</taxon>
        <taxon>Lactobacillales</taxon>
        <taxon>Streptococcaceae</taxon>
        <taxon>Streptococcus</taxon>
    </lineage>
</organism>
<reference key="1">
    <citation type="journal article" date="2010" name="Genome Biol.">
        <title>Structure and dynamics of the pan-genome of Streptococcus pneumoniae and closely related species.</title>
        <authorList>
            <person name="Donati C."/>
            <person name="Hiller N.L."/>
            <person name="Tettelin H."/>
            <person name="Muzzi A."/>
            <person name="Croucher N.J."/>
            <person name="Angiuoli S.V."/>
            <person name="Oggioni M."/>
            <person name="Dunning Hotopp J.C."/>
            <person name="Hu F.Z."/>
            <person name="Riley D.R."/>
            <person name="Covacci A."/>
            <person name="Mitchell T.J."/>
            <person name="Bentley S.D."/>
            <person name="Kilian M."/>
            <person name="Ehrlich G.D."/>
            <person name="Rappuoli R."/>
            <person name="Moxon E.R."/>
            <person name="Masignani V."/>
        </authorList>
    </citation>
    <scope>NUCLEOTIDE SEQUENCE [LARGE SCALE GENOMIC DNA]</scope>
    <source>
        <strain>JJA</strain>
    </source>
</reference>
<comment type="function">
    <text evidence="1">Endonuclease that resolves Holliday junction intermediates in genetic recombination. Cleaves mobile four-strand junctions by introducing symmetrical nicks in paired strands. Promotes annealing of linear ssDNA with homologous dsDNA. Required for DNA repair, homologous recombination and chromosome segregation.</text>
</comment>
<comment type="catalytic activity">
    <reaction evidence="1">
        <text>Endonucleolytic cleavage at a junction such as a reciprocal single-stranded crossover between two homologous DNA duplexes (Holliday junction).</text>
        <dbReference type="EC" id="3.1.21.10"/>
    </reaction>
</comment>
<comment type="cofactor">
    <cofactor evidence="1">
        <name>Mg(2+)</name>
        <dbReference type="ChEBI" id="CHEBI:18420"/>
    </cofactor>
    <text evidence="1">Binds 1 Mg(2+) ion per subunit.</text>
</comment>
<comment type="subcellular location">
    <subcellularLocation>
        <location evidence="1">Cytoplasm</location>
    </subcellularLocation>
</comment>
<comment type="similarity">
    <text evidence="1">Belongs to the RecU family.</text>
</comment>
<proteinExistence type="inferred from homology"/>
<gene>
    <name evidence="1" type="primary">recU</name>
    <name type="ordered locus">SPJ_0356</name>
</gene>
<protein>
    <recommendedName>
        <fullName evidence="1">Holliday junction resolvase RecU</fullName>
        <ecNumber evidence="1">3.1.21.10</ecNumber>
    </recommendedName>
    <alternativeName>
        <fullName evidence="1">Recombination protein U homolog</fullName>
    </alternativeName>
</protein>